<dbReference type="EC" id="3.6.1.-"/>
<dbReference type="EMBL" id="X75780">
    <property type="protein sequence ID" value="CAA53401.1"/>
    <property type="molecule type" value="Genomic_DNA"/>
</dbReference>
<dbReference type="EMBL" id="Z28073">
    <property type="protein sequence ID" value="CAA81910.1"/>
    <property type="molecule type" value="Genomic_DNA"/>
</dbReference>
<dbReference type="EMBL" id="BK006944">
    <property type="protein sequence ID" value="DAA09083.1"/>
    <property type="molecule type" value="Genomic_DNA"/>
</dbReference>
<dbReference type="PIR" id="S37895">
    <property type="entry name" value="S37895"/>
</dbReference>
<dbReference type="RefSeq" id="NP_012850.1">
    <property type="nucleotide sequence ID" value="NM_001179639.1"/>
</dbReference>
<dbReference type="SMR" id="P36016"/>
<dbReference type="BioGRID" id="34058">
    <property type="interactions" value="395"/>
</dbReference>
<dbReference type="DIP" id="DIP-6520N"/>
<dbReference type="FunCoup" id="P36016">
    <property type="interactions" value="281"/>
</dbReference>
<dbReference type="IntAct" id="P36016">
    <property type="interactions" value="15"/>
</dbReference>
<dbReference type="MINT" id="P36016"/>
<dbReference type="STRING" id="4932.YKL073W"/>
<dbReference type="TCDB" id="1.A.33.1.6">
    <property type="family name" value="the cation channel-forming heat shock protein-70 (hsp70) family"/>
</dbReference>
<dbReference type="GlyCosmos" id="P36016">
    <property type="glycosylation" value="7 sites, No reported glycans"/>
</dbReference>
<dbReference type="GlyGen" id="P36016">
    <property type="glycosylation" value="7 sites"/>
</dbReference>
<dbReference type="PaxDb" id="4932-YKL073W"/>
<dbReference type="PeptideAtlas" id="P36016"/>
<dbReference type="EnsemblFungi" id="YKL073W_mRNA">
    <property type="protein sequence ID" value="YKL073W"/>
    <property type="gene ID" value="YKL073W"/>
</dbReference>
<dbReference type="GeneID" id="853789"/>
<dbReference type="KEGG" id="sce:YKL073W"/>
<dbReference type="AGR" id="SGD:S000001556"/>
<dbReference type="SGD" id="S000001556">
    <property type="gene designation" value="LHS1"/>
</dbReference>
<dbReference type="VEuPathDB" id="FungiDB:YKL073W"/>
<dbReference type="eggNOG" id="KOG0104">
    <property type="taxonomic scope" value="Eukaryota"/>
</dbReference>
<dbReference type="GeneTree" id="ENSGT00940000175983"/>
<dbReference type="HOGENOM" id="CLU_005965_5_0_1"/>
<dbReference type="InParanoid" id="P36016"/>
<dbReference type="OMA" id="DYGQQNI"/>
<dbReference type="OrthoDB" id="10262720at2759"/>
<dbReference type="BioCyc" id="YEAST:G3O-31869-MONOMER"/>
<dbReference type="BioGRID-ORCS" id="853789">
    <property type="hits" value="2 hits in 10 CRISPR screens"/>
</dbReference>
<dbReference type="PRO" id="PR:P36016"/>
<dbReference type="Proteomes" id="UP000002311">
    <property type="component" value="Chromosome XI"/>
</dbReference>
<dbReference type="RNAct" id="P36016">
    <property type="molecule type" value="protein"/>
</dbReference>
<dbReference type="GO" id="GO:0005783">
    <property type="term" value="C:endoplasmic reticulum"/>
    <property type="evidence" value="ECO:0007005"/>
    <property type="project" value="SGD"/>
</dbReference>
<dbReference type="GO" id="GO:0034663">
    <property type="term" value="C:endoplasmic reticulum chaperone complex"/>
    <property type="evidence" value="ECO:0000318"/>
    <property type="project" value="GO_Central"/>
</dbReference>
<dbReference type="GO" id="GO:0005788">
    <property type="term" value="C:endoplasmic reticulum lumen"/>
    <property type="evidence" value="ECO:0000314"/>
    <property type="project" value="SGD"/>
</dbReference>
<dbReference type="GO" id="GO:0000774">
    <property type="term" value="F:adenyl-nucleotide exchange factor activity"/>
    <property type="evidence" value="ECO:0000314"/>
    <property type="project" value="SGD"/>
</dbReference>
<dbReference type="GO" id="GO:0005524">
    <property type="term" value="F:ATP binding"/>
    <property type="evidence" value="ECO:0000314"/>
    <property type="project" value="SGD"/>
</dbReference>
<dbReference type="GO" id="GO:0016887">
    <property type="term" value="F:ATP hydrolysis activity"/>
    <property type="evidence" value="ECO:0007669"/>
    <property type="project" value="RHEA"/>
</dbReference>
<dbReference type="GO" id="GO:0140662">
    <property type="term" value="F:ATP-dependent protein folding chaperone"/>
    <property type="evidence" value="ECO:0007669"/>
    <property type="project" value="InterPro"/>
</dbReference>
<dbReference type="GO" id="GO:0051082">
    <property type="term" value="F:unfolded protein binding"/>
    <property type="evidence" value="ECO:0000315"/>
    <property type="project" value="SGD"/>
</dbReference>
<dbReference type="GO" id="GO:0031204">
    <property type="term" value="P:post-translational protein targeting to membrane, translocation"/>
    <property type="evidence" value="ECO:0000315"/>
    <property type="project" value="SGD"/>
</dbReference>
<dbReference type="GO" id="GO:0006986">
    <property type="term" value="P:response to unfolded protein"/>
    <property type="evidence" value="ECO:0000315"/>
    <property type="project" value="SGD"/>
</dbReference>
<dbReference type="CDD" id="cd10230">
    <property type="entry name" value="ASKHA_NBD_HSP70_HYOU1"/>
    <property type="match status" value="1"/>
</dbReference>
<dbReference type="FunFam" id="3.90.640.10:FF:000062">
    <property type="entry name" value="Lhs1p"/>
    <property type="match status" value="1"/>
</dbReference>
<dbReference type="Gene3D" id="1.20.1270.10">
    <property type="match status" value="1"/>
</dbReference>
<dbReference type="Gene3D" id="3.30.30.30">
    <property type="match status" value="1"/>
</dbReference>
<dbReference type="Gene3D" id="3.30.420.40">
    <property type="match status" value="2"/>
</dbReference>
<dbReference type="Gene3D" id="3.90.640.10">
    <property type="entry name" value="Actin, Chain A, domain 4"/>
    <property type="match status" value="1"/>
</dbReference>
<dbReference type="InterPro" id="IPR043129">
    <property type="entry name" value="ATPase_NBD"/>
</dbReference>
<dbReference type="InterPro" id="IPR018181">
    <property type="entry name" value="Heat_shock_70_CS"/>
</dbReference>
<dbReference type="InterPro" id="IPR029048">
    <property type="entry name" value="HSP70_C_sf"/>
</dbReference>
<dbReference type="InterPro" id="IPR013126">
    <property type="entry name" value="Hsp_70_fam"/>
</dbReference>
<dbReference type="PANTHER" id="PTHR45639">
    <property type="entry name" value="HSC70CB, ISOFORM G-RELATED"/>
    <property type="match status" value="1"/>
</dbReference>
<dbReference type="PANTHER" id="PTHR45639:SF3">
    <property type="entry name" value="HYPOXIA UP-REGULATED PROTEIN 1"/>
    <property type="match status" value="1"/>
</dbReference>
<dbReference type="Pfam" id="PF00012">
    <property type="entry name" value="HSP70"/>
    <property type="match status" value="1"/>
</dbReference>
<dbReference type="PRINTS" id="PR00301">
    <property type="entry name" value="HEATSHOCK70"/>
</dbReference>
<dbReference type="SUPFAM" id="SSF53067">
    <property type="entry name" value="Actin-like ATPase domain"/>
    <property type="match status" value="2"/>
</dbReference>
<dbReference type="PROSITE" id="PS00014">
    <property type="entry name" value="ER_TARGET"/>
    <property type="match status" value="1"/>
</dbReference>
<dbReference type="PROSITE" id="PS00329">
    <property type="entry name" value="HSP70_2"/>
    <property type="match status" value="1"/>
</dbReference>
<dbReference type="PROSITE" id="PS01036">
    <property type="entry name" value="HSP70_3"/>
    <property type="match status" value="1"/>
</dbReference>
<feature type="signal peptide" evidence="1">
    <location>
        <begin position="1"/>
        <end position="20"/>
    </location>
</feature>
<feature type="chain" id="PRO_0000013556" description="Heat shock protein 70 homolog LHS1">
    <location>
        <begin position="21"/>
        <end position="881"/>
    </location>
</feature>
<feature type="region of interest" description="Disordered" evidence="3">
    <location>
        <begin position="833"/>
        <end position="881"/>
    </location>
</feature>
<feature type="short sequence motif" description="Prevents secretion from ER" evidence="2">
    <location>
        <begin position="878"/>
        <end position="881"/>
    </location>
</feature>
<feature type="compositionally biased region" description="Basic and acidic residues" evidence="3">
    <location>
        <begin position="833"/>
        <end position="844"/>
    </location>
</feature>
<feature type="compositionally biased region" description="Polar residues" evidence="3">
    <location>
        <begin position="859"/>
        <end position="871"/>
    </location>
</feature>
<feature type="compositionally biased region" description="Acidic residues" evidence="3">
    <location>
        <begin position="872"/>
        <end position="881"/>
    </location>
</feature>
<feature type="glycosylation site" description="N-linked (GlcNAc...) asparagine" evidence="1">
    <location>
        <position position="128"/>
    </location>
</feature>
<feature type="glycosylation site" description="N-linked (GlcNAc...) asparagine" evidence="1">
    <location>
        <position position="458"/>
    </location>
</feature>
<feature type="glycosylation site" description="N-linked (GlcNAc...) asparagine" evidence="1">
    <location>
        <position position="474"/>
    </location>
</feature>
<feature type="glycosylation site" description="N-linked (GlcNAc...) asparagine" evidence="1">
    <location>
        <position position="481"/>
    </location>
</feature>
<feature type="glycosylation site" description="N-linked (GlcNAc...) asparagine" evidence="1">
    <location>
        <position position="489"/>
    </location>
</feature>
<feature type="glycosylation site" description="N-linked (GlcNAc...) asparagine" evidence="1">
    <location>
        <position position="527"/>
    </location>
</feature>
<feature type="glycosylation site" description="N-linked (GlcNAc...) asparagine" evidence="1">
    <location>
        <position position="844"/>
    </location>
</feature>
<feature type="mutagenesis site" description="In allele LHS1-1; constitutive ATPase activity." evidence="6">
    <original>G</original>
    <variation>D</variation>
    <location>
        <position position="239"/>
    </location>
</feature>
<organism>
    <name type="scientific">Saccharomyces cerevisiae (strain ATCC 204508 / S288c)</name>
    <name type="common">Baker's yeast</name>
    <dbReference type="NCBI Taxonomy" id="559292"/>
    <lineage>
        <taxon>Eukaryota</taxon>
        <taxon>Fungi</taxon>
        <taxon>Dikarya</taxon>
        <taxon>Ascomycota</taxon>
        <taxon>Saccharomycotina</taxon>
        <taxon>Saccharomycetes</taxon>
        <taxon>Saccharomycetales</taxon>
        <taxon>Saccharomycetaceae</taxon>
        <taxon>Saccharomyces</taxon>
    </lineage>
</organism>
<name>LHS1_YEAST</name>
<reference key="1">
    <citation type="journal article" date="1994" name="Yeast">
        <title>Sequence of a 20.7 kb region of yeast chromosome XI includes the NUP100 gene, an open reading frame (ORF) possibly representing a nucleoside diphosphate kinase gene, tRNAs for His, Val and Trp in addition to seven ORFs with weak or no significant similarity to known proteins.</title>
        <authorList>
            <person name="Rasmussen S.W."/>
        </authorList>
    </citation>
    <scope>NUCLEOTIDE SEQUENCE [GENOMIC DNA]</scope>
    <source>
        <strain>ATCC 204508 / S288c</strain>
    </source>
</reference>
<reference key="2">
    <citation type="journal article" date="1994" name="Nature">
        <title>Complete DNA sequence of yeast chromosome XI.</title>
        <authorList>
            <person name="Dujon B."/>
            <person name="Alexandraki D."/>
            <person name="Andre B."/>
            <person name="Ansorge W."/>
            <person name="Baladron V."/>
            <person name="Ballesta J.P.G."/>
            <person name="Banrevi A."/>
            <person name="Bolle P.-A."/>
            <person name="Bolotin-Fukuhara M."/>
            <person name="Bossier P."/>
            <person name="Bou G."/>
            <person name="Boyer J."/>
            <person name="Buitrago M.J."/>
            <person name="Cheret G."/>
            <person name="Colleaux L."/>
            <person name="Daignan-Fornier B."/>
            <person name="del Rey F."/>
            <person name="Dion C."/>
            <person name="Domdey H."/>
            <person name="Duesterhoeft A."/>
            <person name="Duesterhus S."/>
            <person name="Entian K.-D."/>
            <person name="Erfle H."/>
            <person name="Esteban P.F."/>
            <person name="Feldmann H."/>
            <person name="Fernandes L."/>
            <person name="Fobo G.M."/>
            <person name="Fritz C."/>
            <person name="Fukuhara H."/>
            <person name="Gabel C."/>
            <person name="Gaillon L."/>
            <person name="Garcia-Cantalejo J.M."/>
            <person name="Garcia-Ramirez J.J."/>
            <person name="Gent M.E."/>
            <person name="Ghazvini M."/>
            <person name="Goffeau A."/>
            <person name="Gonzalez A."/>
            <person name="Grothues D."/>
            <person name="Guerreiro P."/>
            <person name="Hegemann J.H."/>
            <person name="Hewitt N."/>
            <person name="Hilger F."/>
            <person name="Hollenberg C.P."/>
            <person name="Horaitis O."/>
            <person name="Indge K.J."/>
            <person name="Jacquier A."/>
            <person name="James C.M."/>
            <person name="Jauniaux J.-C."/>
            <person name="Jimenez A."/>
            <person name="Keuchel H."/>
            <person name="Kirchrath L."/>
            <person name="Kleine K."/>
            <person name="Koetter P."/>
            <person name="Legrain P."/>
            <person name="Liebl S."/>
            <person name="Louis E.J."/>
            <person name="Maia e Silva A."/>
            <person name="Marck C."/>
            <person name="Monnier A.-L."/>
            <person name="Moestl D."/>
            <person name="Mueller S."/>
            <person name="Obermaier B."/>
            <person name="Oliver S.G."/>
            <person name="Pallier C."/>
            <person name="Pascolo S."/>
            <person name="Pfeiffer F."/>
            <person name="Philippsen P."/>
            <person name="Planta R.J."/>
            <person name="Pohl F.M."/>
            <person name="Pohl T.M."/>
            <person name="Poehlmann R."/>
            <person name="Portetelle D."/>
            <person name="Purnelle B."/>
            <person name="Puzos V."/>
            <person name="Ramezani Rad M."/>
            <person name="Rasmussen S.W."/>
            <person name="Remacha M.A."/>
            <person name="Revuelta J.L."/>
            <person name="Richard G.-F."/>
            <person name="Rieger M."/>
            <person name="Rodrigues-Pousada C."/>
            <person name="Rose M."/>
            <person name="Rupp T."/>
            <person name="Santos M.A."/>
            <person name="Schwager C."/>
            <person name="Sensen C."/>
            <person name="Skala J."/>
            <person name="Soares H."/>
            <person name="Sor F."/>
            <person name="Stegemann J."/>
            <person name="Tettelin H."/>
            <person name="Thierry A."/>
            <person name="Tzermia M."/>
            <person name="Urrestarazu L.A."/>
            <person name="van Dyck L."/>
            <person name="van Vliet-Reedijk J.C."/>
            <person name="Valens M."/>
            <person name="Vandenbol M."/>
            <person name="Vilela C."/>
            <person name="Vissers S."/>
            <person name="von Wettstein D."/>
            <person name="Voss H."/>
            <person name="Wiemann S."/>
            <person name="Xu G."/>
            <person name="Zimmermann J."/>
            <person name="Haasemann M."/>
            <person name="Becker I."/>
            <person name="Mewes H.-W."/>
        </authorList>
    </citation>
    <scope>NUCLEOTIDE SEQUENCE [LARGE SCALE GENOMIC DNA]</scope>
    <source>
        <strain>ATCC 204508 / S288c</strain>
    </source>
</reference>
<reference key="3">
    <citation type="journal article" date="2014" name="G3 (Bethesda)">
        <title>The reference genome sequence of Saccharomyces cerevisiae: Then and now.</title>
        <authorList>
            <person name="Engel S.R."/>
            <person name="Dietrich F.S."/>
            <person name="Fisk D.G."/>
            <person name="Binkley G."/>
            <person name="Balakrishnan R."/>
            <person name="Costanzo M.C."/>
            <person name="Dwight S.S."/>
            <person name="Hitz B.C."/>
            <person name="Karra K."/>
            <person name="Nash R.S."/>
            <person name="Weng S."/>
            <person name="Wong E.D."/>
            <person name="Lloyd P."/>
            <person name="Skrzypek M.S."/>
            <person name="Miyasato S.R."/>
            <person name="Simison M."/>
            <person name="Cherry J.M."/>
        </authorList>
    </citation>
    <scope>GENOME REANNOTATION</scope>
    <source>
        <strain>ATCC 204508 / S288c</strain>
    </source>
</reference>
<reference key="4">
    <citation type="journal article" date="1996" name="EMBO J.">
        <title>A novel Hsp70 of the yeast ER lumen is required for the efficient translocation of a number of protein precursors.</title>
        <authorList>
            <person name="Craven R.A."/>
            <person name="Egerton M."/>
            <person name="Stirling C.J."/>
        </authorList>
    </citation>
    <scope>CHARACTERIZATION</scope>
</reference>
<reference key="5">
    <citation type="journal article" date="2000" name="Cell">
        <title>Functional and genomic analyses reveal an essential coordination between the unfolded protein response and ER-associated degradation.</title>
        <authorList>
            <person name="Travers K.J."/>
            <person name="Patil C.K."/>
            <person name="Wodicka L."/>
            <person name="Lockhart D.J."/>
            <person name="Weissman J.S."/>
            <person name="Walter P."/>
        </authorList>
    </citation>
    <scope>INDUCTION</scope>
</reference>
<reference key="6">
    <citation type="journal article" date="2003" name="Nature">
        <title>Global analysis of protein expression in yeast.</title>
        <authorList>
            <person name="Ghaemmaghami S."/>
            <person name="Huh W.-K."/>
            <person name="Bower K."/>
            <person name="Howson R.W."/>
            <person name="Belle A."/>
            <person name="Dephoure N."/>
            <person name="O'Shea E.K."/>
            <person name="Weissman J.S."/>
        </authorList>
    </citation>
    <scope>LEVEL OF PROTEIN EXPRESSION</scope>
</reference>
<reference key="7">
    <citation type="journal article" date="2004" name="Science">
        <title>Coordinated activation of Hsp70 chaperones.</title>
        <authorList>
            <person name="Steel G.J."/>
            <person name="Fullerton D.M."/>
            <person name="Tyson J.R."/>
            <person name="Stirling C.J."/>
        </authorList>
    </citation>
    <scope>FUNCTION</scope>
    <scope>INTERACTION WITH KAR2</scope>
    <scope>MUTAGENESIS OF GLY-239</scope>
</reference>
<proteinExistence type="evidence at protein level"/>
<sequence>MRNVLRLLFLTAFVAIGSLAAVLGVDYGQQNIKAIVVSPQAPLELVLTPEAKRKEISGLSIKRLPGYGKDDPNGIERIYGSAVGSLATRFPQNTLLHLKPLLGKSLEDETTVTLYSKQHPGLEMVSTNRSTIAFLVDNVEYPLEELVAMNVQEIANRANSLLKDRDARTEDFVNKMSFTIPDFFDQHQRKALLDASSITTGIEETYLVSEGMSVAVNFVLKQRQFPPGEQQHYIVYDMGSGSIKASMFSILQPEDTTQPVTIEFEGYGYNPHLGGAKFTMDIGSLIENKFLETHPAIRTDELHANPKALAKINQAAEKAKLILSANSEASINIESLINDIDFRTSITRQEFEEFIADSLLDIVKPINDAVTKQFGGYGTNLPEINGVILAGGSSRIPIVQDQLIKLVSEEKVLRNVNADESAVNGVVMRGIKLSNSFKTKPLNVVDRSVNTYSFKLSNESELYDVFTRGSAYPNKTSILTNTTDSIPNNFTIDLFENGKLFETITVNSGAIKNSYSSDKCSSGVAYNITFDLSSDRLFSIQEVNCICQSENDIGNSKQIKNKGSRLAFTSEDVEIKRLSPSERSRLHEHIKLLDKQDKERFQFQENLNVLESNLYDARNLLMDDEVMQNGPKSQVEELSEMVKVYLDWLEDASFDTDPEDIVSRIREIGILKKKIELYMDSAKEPLNSQQFKGMLEEGHKLLQAIETHKNTVEEFLSQFETEFADTIDNVREEFKKIKQPAYVSKALSTWEETLTSFKNSISEIEKFLAKNLFGEDLREHLFEIKLQFDMYRTKLEEKLRLIKSGDESRLNEIKKLHLRNFRLQKRKEEKLKRKLEQEKSRNNNETESTVINSADDKTTIVNDKTTESNPSSEEDILHDEL</sequence>
<comment type="function">
    <text evidence="6">Chaperone required for protein translocation and folding in the endoplasmic reticulum.</text>
</comment>
<comment type="catalytic activity">
    <reaction>
        <text>ATP + H2O = ADP + phosphate + H(+)</text>
        <dbReference type="Rhea" id="RHEA:13065"/>
        <dbReference type="ChEBI" id="CHEBI:15377"/>
        <dbReference type="ChEBI" id="CHEBI:15378"/>
        <dbReference type="ChEBI" id="CHEBI:30616"/>
        <dbReference type="ChEBI" id="CHEBI:43474"/>
        <dbReference type="ChEBI" id="CHEBI:456216"/>
    </reaction>
</comment>
<comment type="subunit">
    <text evidence="6">Interacts with the heat shock protein 70 (HSP70) KAR2, and this stimulates nucleotide exchange on KAR2. KAR2 in turn acts to stimulate the ATPase activity of LHS1.</text>
</comment>
<comment type="subcellular location">
    <subcellularLocation>
        <location>Endoplasmic reticulum lumen</location>
    </subcellularLocation>
</comment>
<comment type="induction">
    <text evidence="4">By the unfolded protein response (UPR).</text>
</comment>
<comment type="PTM">
    <text>N-glycosylated.</text>
</comment>
<comment type="miscellaneous">
    <text evidence="5">Present with 137 molecules/cell in log phase SD medium.</text>
</comment>
<comment type="similarity">
    <text evidence="7">Belongs to the heat shock protein 70 family.</text>
</comment>
<gene>
    <name type="primary">LHS1</name>
    <name type="ordered locus">YKL073W</name>
    <name type="ORF">YKL355</name>
</gene>
<evidence type="ECO:0000255" key="1"/>
<evidence type="ECO:0000255" key="2">
    <source>
        <dbReference type="PROSITE-ProRule" id="PRU10138"/>
    </source>
</evidence>
<evidence type="ECO:0000256" key="3">
    <source>
        <dbReference type="SAM" id="MobiDB-lite"/>
    </source>
</evidence>
<evidence type="ECO:0000269" key="4">
    <source>
    </source>
</evidence>
<evidence type="ECO:0000269" key="5">
    <source>
    </source>
</evidence>
<evidence type="ECO:0000269" key="6">
    <source>
    </source>
</evidence>
<evidence type="ECO:0000305" key="7"/>
<accession>P36016</accession>
<accession>D6VXL3</accession>
<keyword id="KW-0067">ATP-binding</keyword>
<keyword id="KW-0143">Chaperone</keyword>
<keyword id="KW-0256">Endoplasmic reticulum</keyword>
<keyword id="KW-0325">Glycoprotein</keyword>
<keyword id="KW-0378">Hydrolase</keyword>
<keyword id="KW-0547">Nucleotide-binding</keyword>
<keyword id="KW-1185">Reference proteome</keyword>
<keyword id="KW-0732">Signal</keyword>
<protein>
    <recommendedName>
        <fullName>Heat shock protein 70 homolog LHS1</fullName>
        <ecNumber>3.6.1.-</ecNumber>
    </recommendedName>
</protein>